<evidence type="ECO:0000250" key="1">
    <source>
        <dbReference type="UniProtKB" id="P00403"/>
    </source>
</evidence>
<evidence type="ECO:0000250" key="2">
    <source>
        <dbReference type="UniProtKB" id="P00410"/>
    </source>
</evidence>
<evidence type="ECO:0000250" key="3">
    <source>
        <dbReference type="UniProtKB" id="P68530"/>
    </source>
</evidence>
<evidence type="ECO:0000305" key="4"/>
<dbReference type="EC" id="7.1.1.9"/>
<dbReference type="EMBL" id="X72204">
    <property type="protein sequence ID" value="CAA50998.1"/>
    <property type="molecule type" value="Genomic_DNA"/>
</dbReference>
<dbReference type="PIR" id="S41823">
    <property type="entry name" value="S41823"/>
</dbReference>
<dbReference type="RefSeq" id="NP_007059.1">
    <property type="nucleotide sequence ID" value="NC_001601.1"/>
</dbReference>
<dbReference type="SMR" id="P41294"/>
<dbReference type="GeneID" id="807732"/>
<dbReference type="KEGG" id="bmus:807732"/>
<dbReference type="CTD" id="4513"/>
<dbReference type="OrthoDB" id="539285at2759"/>
<dbReference type="Proteomes" id="UP000694857">
    <property type="component" value="Mitochondrion MT"/>
</dbReference>
<dbReference type="GO" id="GO:0005743">
    <property type="term" value="C:mitochondrial inner membrane"/>
    <property type="evidence" value="ECO:0007669"/>
    <property type="project" value="UniProtKB-SubCell"/>
</dbReference>
<dbReference type="GO" id="GO:0045277">
    <property type="term" value="C:respiratory chain complex IV"/>
    <property type="evidence" value="ECO:0000250"/>
    <property type="project" value="UniProtKB"/>
</dbReference>
<dbReference type="GO" id="GO:0005507">
    <property type="term" value="F:copper ion binding"/>
    <property type="evidence" value="ECO:0007669"/>
    <property type="project" value="InterPro"/>
</dbReference>
<dbReference type="GO" id="GO:0004129">
    <property type="term" value="F:cytochrome-c oxidase activity"/>
    <property type="evidence" value="ECO:0007669"/>
    <property type="project" value="UniProtKB-EC"/>
</dbReference>
<dbReference type="GO" id="GO:0042773">
    <property type="term" value="P:ATP synthesis coupled electron transport"/>
    <property type="evidence" value="ECO:0007669"/>
    <property type="project" value="TreeGrafter"/>
</dbReference>
<dbReference type="CDD" id="cd13912">
    <property type="entry name" value="CcO_II_C"/>
    <property type="match status" value="1"/>
</dbReference>
<dbReference type="FunFam" id="1.10.287.90:FF:000001">
    <property type="entry name" value="Cytochrome c oxidase subunit 2"/>
    <property type="match status" value="1"/>
</dbReference>
<dbReference type="FunFam" id="2.60.40.420:FF:000001">
    <property type="entry name" value="Cytochrome c oxidase subunit 2"/>
    <property type="match status" value="1"/>
</dbReference>
<dbReference type="Gene3D" id="1.10.287.90">
    <property type="match status" value="1"/>
</dbReference>
<dbReference type="Gene3D" id="2.60.40.420">
    <property type="entry name" value="Cupredoxins - blue copper proteins"/>
    <property type="match status" value="1"/>
</dbReference>
<dbReference type="InterPro" id="IPR045187">
    <property type="entry name" value="CcO_II"/>
</dbReference>
<dbReference type="InterPro" id="IPR002429">
    <property type="entry name" value="CcO_II-like_C"/>
</dbReference>
<dbReference type="InterPro" id="IPR034210">
    <property type="entry name" value="CcO_II_C"/>
</dbReference>
<dbReference type="InterPro" id="IPR001505">
    <property type="entry name" value="Copper_CuA"/>
</dbReference>
<dbReference type="InterPro" id="IPR008972">
    <property type="entry name" value="Cupredoxin"/>
</dbReference>
<dbReference type="InterPro" id="IPR014222">
    <property type="entry name" value="Cyt_c_oxidase_su2"/>
</dbReference>
<dbReference type="InterPro" id="IPR011759">
    <property type="entry name" value="Cyt_c_oxidase_su2_TM_dom"/>
</dbReference>
<dbReference type="InterPro" id="IPR036257">
    <property type="entry name" value="Cyt_c_oxidase_su2_TM_sf"/>
</dbReference>
<dbReference type="NCBIfam" id="TIGR02866">
    <property type="entry name" value="CoxB"/>
    <property type="match status" value="1"/>
</dbReference>
<dbReference type="PANTHER" id="PTHR22888:SF9">
    <property type="entry name" value="CYTOCHROME C OXIDASE SUBUNIT 2"/>
    <property type="match status" value="1"/>
</dbReference>
<dbReference type="PANTHER" id="PTHR22888">
    <property type="entry name" value="CYTOCHROME C OXIDASE, SUBUNIT II"/>
    <property type="match status" value="1"/>
</dbReference>
<dbReference type="Pfam" id="PF00116">
    <property type="entry name" value="COX2"/>
    <property type="match status" value="1"/>
</dbReference>
<dbReference type="Pfam" id="PF02790">
    <property type="entry name" value="COX2_TM"/>
    <property type="match status" value="1"/>
</dbReference>
<dbReference type="PRINTS" id="PR01166">
    <property type="entry name" value="CYCOXIDASEII"/>
</dbReference>
<dbReference type="SUPFAM" id="SSF49503">
    <property type="entry name" value="Cupredoxins"/>
    <property type="match status" value="1"/>
</dbReference>
<dbReference type="SUPFAM" id="SSF81464">
    <property type="entry name" value="Cytochrome c oxidase subunit II-like, transmembrane region"/>
    <property type="match status" value="1"/>
</dbReference>
<dbReference type="PROSITE" id="PS00078">
    <property type="entry name" value="COX2"/>
    <property type="match status" value="1"/>
</dbReference>
<dbReference type="PROSITE" id="PS50857">
    <property type="entry name" value="COX2_CUA"/>
    <property type="match status" value="1"/>
</dbReference>
<dbReference type="PROSITE" id="PS50999">
    <property type="entry name" value="COX2_TM"/>
    <property type="match status" value="1"/>
</dbReference>
<gene>
    <name type="primary">MT-CO2</name>
    <name type="synonym">COII</name>
    <name type="synonym">COX2</name>
    <name type="synonym">COXII</name>
    <name type="synonym">MTCO2</name>
</gene>
<keyword id="KW-0186">Copper</keyword>
<keyword id="KW-0249">Electron transport</keyword>
<keyword id="KW-0460">Magnesium</keyword>
<keyword id="KW-0472">Membrane</keyword>
<keyword id="KW-0479">Metal-binding</keyword>
<keyword id="KW-0496">Mitochondrion</keyword>
<keyword id="KW-0999">Mitochondrion inner membrane</keyword>
<keyword id="KW-1185">Reference proteome</keyword>
<keyword id="KW-0679">Respiratory chain</keyword>
<keyword id="KW-1278">Translocase</keyword>
<keyword id="KW-0812">Transmembrane</keyword>
<keyword id="KW-1133">Transmembrane helix</keyword>
<keyword id="KW-0813">Transport</keyword>
<name>COX2_BALMU</name>
<accession>P41294</accession>
<organism>
    <name type="scientific">Balaenoptera musculus</name>
    <name type="common">Blue whale</name>
    <dbReference type="NCBI Taxonomy" id="9771"/>
    <lineage>
        <taxon>Eukaryota</taxon>
        <taxon>Metazoa</taxon>
        <taxon>Chordata</taxon>
        <taxon>Craniata</taxon>
        <taxon>Vertebrata</taxon>
        <taxon>Euteleostomi</taxon>
        <taxon>Mammalia</taxon>
        <taxon>Eutheria</taxon>
        <taxon>Laurasiatheria</taxon>
        <taxon>Artiodactyla</taxon>
        <taxon>Whippomorpha</taxon>
        <taxon>Cetacea</taxon>
        <taxon>Mysticeti</taxon>
        <taxon>Balaenopteridae</taxon>
        <taxon>Balaenoptera</taxon>
    </lineage>
</organism>
<sequence>MAYPFQLGFQDATSPIMEELLHFHDHTLMIVFLISSLVLYIITLMLTTKLTHTSTMDAQEVETVWTILPAIILILIALPSLRILYMMDEVNNPSLTVKTMGHQWYWSYEYTDYEDLSFDSYMIPTSDLKPGELRLLEVDNRVVLPMEMTIRMLVSSEDVLHSWAVPSLGLKTDAIPGRLNQTTLMSTRPGLFYGQCSEICGSNHSFMPIVLELVPLEFFEKWSASML</sequence>
<reference key="1">
    <citation type="journal article" date="1993" name="J. Mol. Evol.">
        <title>Comparison between the complete mtDNA sequences of the blue and the fin whale, two species that can hybridize in nature.</title>
        <authorList>
            <person name="Arnason U."/>
            <person name="Gullberg A."/>
        </authorList>
    </citation>
    <scope>NUCLEOTIDE SEQUENCE [GENOMIC DNA]</scope>
</reference>
<protein>
    <recommendedName>
        <fullName>Cytochrome c oxidase subunit 2</fullName>
        <ecNumber>7.1.1.9</ecNumber>
    </recommendedName>
    <alternativeName>
        <fullName>Cytochrome c oxidase polypeptide II</fullName>
    </alternativeName>
</protein>
<feature type="chain" id="PRO_0000183507" description="Cytochrome c oxidase subunit 2">
    <location>
        <begin position="1"/>
        <end position="227"/>
    </location>
</feature>
<feature type="topological domain" description="Mitochondrial intermembrane" evidence="3">
    <location>
        <begin position="1"/>
        <end position="14"/>
    </location>
</feature>
<feature type="transmembrane region" description="Helical; Name=I" evidence="3">
    <location>
        <begin position="15"/>
        <end position="45"/>
    </location>
</feature>
<feature type="topological domain" description="Mitochondrial matrix" evidence="3">
    <location>
        <begin position="46"/>
        <end position="59"/>
    </location>
</feature>
<feature type="transmembrane region" description="Helical; Name=II" evidence="3">
    <location>
        <begin position="60"/>
        <end position="87"/>
    </location>
</feature>
<feature type="topological domain" description="Mitochondrial intermembrane" evidence="3">
    <location>
        <begin position="88"/>
        <end position="227"/>
    </location>
</feature>
<feature type="binding site" evidence="3">
    <location>
        <position position="161"/>
    </location>
    <ligand>
        <name>Cu cation</name>
        <dbReference type="ChEBI" id="CHEBI:23378"/>
        <label>A1</label>
    </ligand>
</feature>
<feature type="binding site" evidence="3">
    <location>
        <position position="196"/>
    </location>
    <ligand>
        <name>Cu cation</name>
        <dbReference type="ChEBI" id="CHEBI:23378"/>
        <label>A1</label>
    </ligand>
</feature>
<feature type="binding site" evidence="3">
    <location>
        <position position="196"/>
    </location>
    <ligand>
        <name>Cu cation</name>
        <dbReference type="ChEBI" id="CHEBI:23378"/>
        <label>A2</label>
    </ligand>
</feature>
<feature type="binding site" evidence="3">
    <location>
        <position position="198"/>
    </location>
    <ligand>
        <name>Cu cation</name>
        <dbReference type="ChEBI" id="CHEBI:23378"/>
        <label>A2</label>
    </ligand>
</feature>
<feature type="binding site" evidence="3">
    <location>
        <position position="198"/>
    </location>
    <ligand>
        <name>Mg(2+)</name>
        <dbReference type="ChEBI" id="CHEBI:18420"/>
        <note>ligand shared with MT-CO1</note>
    </ligand>
</feature>
<feature type="binding site" evidence="3">
    <location>
        <position position="200"/>
    </location>
    <ligand>
        <name>Cu cation</name>
        <dbReference type="ChEBI" id="CHEBI:23378"/>
        <label>A1</label>
    </ligand>
</feature>
<feature type="binding site" evidence="3">
    <location>
        <position position="200"/>
    </location>
    <ligand>
        <name>Cu cation</name>
        <dbReference type="ChEBI" id="CHEBI:23378"/>
        <label>A2</label>
    </ligand>
</feature>
<feature type="binding site" evidence="3">
    <location>
        <position position="204"/>
    </location>
    <ligand>
        <name>Cu cation</name>
        <dbReference type="ChEBI" id="CHEBI:23378"/>
        <label>A2</label>
    </ligand>
</feature>
<feature type="binding site" evidence="3">
    <location>
        <position position="207"/>
    </location>
    <ligand>
        <name>Cu cation</name>
        <dbReference type="ChEBI" id="CHEBI:23378"/>
        <label>A1</label>
    </ligand>
</feature>
<proteinExistence type="inferred from homology"/>
<comment type="function">
    <text evidence="2">Component of the cytochrome c oxidase, the last enzyme in the mitochondrial electron transport chain which drives oxidative phosphorylation. The respiratory chain contains 3 multisubunit complexes succinate dehydrogenase (complex II, CII), ubiquinol-cytochrome c oxidoreductase (cytochrome b-c1 complex, complex III, CIII) and cytochrome c oxidase (complex IV, CIV), that cooperate to transfer electrons derived from NADH and succinate to molecular oxygen, creating an electrochemical gradient over the inner membrane that drives transmembrane transport and the ATP synthase. Cytochrome c oxidase is the component of the respiratory chain that catalyzes the reduction of oxygen to water. Electrons originating from reduced cytochrome c in the intermembrane space (IMS) are transferred via the dinuclear copper A center (CU(A)) of subunit 2 and heme A of subunit 1 to the active site in subunit 1, a binuclear center (BNC) formed by heme A3 and copper B (CU(B)). The BNC reduces molecular oxygen to 2 water molecules using 4 electrons from cytochrome c in the IMS and 4 protons from the mitochondrial matrix.</text>
</comment>
<comment type="catalytic activity">
    <reaction evidence="2">
        <text>4 Fe(II)-[cytochrome c] + O2 + 8 H(+)(in) = 4 Fe(III)-[cytochrome c] + 2 H2O + 4 H(+)(out)</text>
        <dbReference type="Rhea" id="RHEA:11436"/>
        <dbReference type="Rhea" id="RHEA-COMP:10350"/>
        <dbReference type="Rhea" id="RHEA-COMP:14399"/>
        <dbReference type="ChEBI" id="CHEBI:15377"/>
        <dbReference type="ChEBI" id="CHEBI:15378"/>
        <dbReference type="ChEBI" id="CHEBI:15379"/>
        <dbReference type="ChEBI" id="CHEBI:29033"/>
        <dbReference type="ChEBI" id="CHEBI:29034"/>
        <dbReference type="EC" id="7.1.1.9"/>
    </reaction>
    <physiologicalReaction direction="left-to-right" evidence="2">
        <dbReference type="Rhea" id="RHEA:11437"/>
    </physiologicalReaction>
</comment>
<comment type="cofactor">
    <cofactor evidence="3">
        <name>Cu cation</name>
        <dbReference type="ChEBI" id="CHEBI:23378"/>
    </cofactor>
    <text evidence="3">Binds a dinuclear copper A center per subunit.</text>
</comment>
<comment type="subunit">
    <text evidence="1 3">Component of the cytochrome c oxidase (complex IV, CIV), a multisubunit enzyme composed of 14 subunits. The complex is composed of a catalytic core of 3 subunits MT-CO1, MT-CO2 and MT-CO3, encoded in the mitochondrial DNA, and 11 supernumerary subunits COX4I, COX5A, COX5B, COX6A, COX6B, COX6C, COX7A, COX7B, COX7C, COX8 and NDUFA4, which are encoded in the nuclear genome. The complex exists as a monomer or a dimer and forms supercomplexes (SCs) in the inner mitochondrial membrane with NADH-ubiquinone oxidoreductase (complex I, CI) and ubiquinol-cytochrome c oxidoreductase (cytochrome b-c1 complex, complex III, CIII), resulting in different assemblies (supercomplex SCI(1)III(2)IV(1) and megacomplex MCI(2)III(2)IV(2)) (By similarity). Found in a complex with TMEM177, COA6, COX18, COX20, SCO1 and SCO2. Interacts with TMEM177 in a COX20-dependent manner. Interacts with COX20. Interacts with COX16 (By similarity).</text>
</comment>
<comment type="subcellular location">
    <subcellularLocation>
        <location evidence="3">Mitochondrion inner membrane</location>
        <topology evidence="3">Multi-pass membrane protein</topology>
    </subcellularLocation>
</comment>
<comment type="similarity">
    <text evidence="4">Belongs to the cytochrome c oxidase subunit 2 family.</text>
</comment>
<geneLocation type="mitochondrion"/>